<protein>
    <recommendedName>
        <fullName evidence="1">Hypertrehalosaemic factor</fullName>
    </recommendedName>
    <alternativeName>
        <fullName evidence="4">Adipokinetic hormone 1</fullName>
        <shortName evidence="4">ErgCa-AKH-1</shortName>
    </alternativeName>
    <alternativeName>
        <fullName evidence="1">Hypertrehalosaemic neuropeptide</fullName>
    </alternativeName>
</protein>
<dbReference type="GO" id="GO:0005576">
    <property type="term" value="C:extracellular region"/>
    <property type="evidence" value="ECO:0007669"/>
    <property type="project" value="UniProtKB-SubCell"/>
</dbReference>
<dbReference type="GO" id="GO:0005179">
    <property type="term" value="F:hormone activity"/>
    <property type="evidence" value="ECO:0007669"/>
    <property type="project" value="UniProtKB-KW"/>
</dbReference>
<dbReference type="GO" id="GO:0007218">
    <property type="term" value="P:neuropeptide signaling pathway"/>
    <property type="evidence" value="ECO:0007669"/>
    <property type="project" value="UniProtKB-KW"/>
</dbReference>
<dbReference type="InterPro" id="IPR002047">
    <property type="entry name" value="Adipokinetic_hormone_CS"/>
</dbReference>
<dbReference type="PROSITE" id="PS00256">
    <property type="entry name" value="AKH"/>
    <property type="match status" value="1"/>
</dbReference>
<organism>
    <name type="scientific">Ergaula capucina</name>
    <name type="common">Beetle roach</name>
    <dbReference type="NCBI Taxonomy" id="76901"/>
    <lineage>
        <taxon>Eukaryota</taxon>
        <taxon>Metazoa</taxon>
        <taxon>Ecdysozoa</taxon>
        <taxon>Arthropoda</taxon>
        <taxon>Hexapoda</taxon>
        <taxon>Insecta</taxon>
        <taxon>Pterygota</taxon>
        <taxon>Neoptera</taxon>
        <taxon>Polyneoptera</taxon>
        <taxon>Dictyoptera</taxon>
        <taxon>Blattodea</taxon>
        <taxon>Corydioidea</taxon>
        <taxon>Corydiidae</taxon>
        <taxon>Ergaula</taxon>
    </lineage>
</organism>
<name>HTF_ERGCA</name>
<evidence type="ECO:0000250" key="1">
    <source>
        <dbReference type="UniProtKB" id="P67790"/>
    </source>
</evidence>
<evidence type="ECO:0000255" key="2"/>
<evidence type="ECO:0000269" key="3">
    <source>
    </source>
</evidence>
<evidence type="ECO:0000303" key="4">
    <source>
    </source>
</evidence>
<evidence type="ECO:0000305" key="5"/>
<accession>P85612</accession>
<sequence length="8" mass="1005">QLNFSPNW</sequence>
<keyword id="KW-0027">Amidation</keyword>
<keyword id="KW-0903">Direct protein sequencing</keyword>
<keyword id="KW-0372">Hormone</keyword>
<keyword id="KW-0527">Neuropeptide</keyword>
<keyword id="KW-0873">Pyrrolidone carboxylic acid</keyword>
<keyword id="KW-0964">Secreted</keyword>
<feature type="peptide" id="PRO_0000378645" description="Hypertrehalosaemic factor" evidence="3">
    <location>
        <begin position="1"/>
        <end position="8"/>
    </location>
</feature>
<feature type="modified residue" description="Pyrrolidone carboxylic acid" evidence="3">
    <location>
        <position position="1"/>
    </location>
</feature>
<feature type="modified residue" description="Tryptophan amide" evidence="3">
    <location>
        <position position="8"/>
    </location>
</feature>
<proteinExistence type="evidence at protein level"/>
<reference evidence="5" key="1">
    <citation type="journal article" date="2009" name="BMC Evol. Biol.">
        <title>A proteomic approach for studying insect phylogeny: CAPA peptides of ancient insect taxa (Dictyoptera, Blattoptera) as a test case.</title>
        <authorList>
            <person name="Roth S."/>
            <person name="Fromm B."/>
            <person name="Gaede G."/>
            <person name="Predel R."/>
        </authorList>
    </citation>
    <scope>PROTEIN SEQUENCE</scope>
    <scope>PYROGLUTAMATE FORMATION AT GLN-1</scope>
    <scope>AMIDATION AT TRP-8</scope>
    <source>
        <tissue evidence="3">Corpora cardiaca</tissue>
    </source>
</reference>
<comment type="function">
    <text evidence="5">Hypertrehalosaemic factors are neuropeptides that elevate the level of trehalose in the hemolymph (trehalose is the major carbohydrate in the hemolymph of insects).</text>
</comment>
<comment type="subcellular location">
    <subcellularLocation>
        <location evidence="5">Secreted</location>
    </subcellularLocation>
</comment>
<comment type="similarity">
    <text evidence="2">Belongs to the AKH/HRTH/RPCH family.</text>
</comment>